<proteinExistence type="inferred from homology"/>
<sequence>MELKHVLMIIGIIILTIAPLVMYSGLTEEDGYFGGADGAASDLIMELSPEYEPWFEPFWEPPSGEIESLLFALQAAIGAIIIGYFFGYNKAKYDFESKN</sequence>
<organism>
    <name type="scientific">Methanococcus vannielii (strain ATCC 35089 / DSM 1224 / JCM 13029 / OCM 148 / SB)</name>
    <dbReference type="NCBI Taxonomy" id="406327"/>
    <lineage>
        <taxon>Archaea</taxon>
        <taxon>Methanobacteriati</taxon>
        <taxon>Methanobacteriota</taxon>
        <taxon>Methanomada group</taxon>
        <taxon>Methanococci</taxon>
        <taxon>Methanococcales</taxon>
        <taxon>Methanococcaceae</taxon>
        <taxon>Methanococcus</taxon>
    </lineage>
</organism>
<dbReference type="EMBL" id="CP000742">
    <property type="protein sequence ID" value="ABR54697.1"/>
    <property type="molecule type" value="Genomic_DNA"/>
</dbReference>
<dbReference type="RefSeq" id="WP_011972599.1">
    <property type="nucleotide sequence ID" value="NC_009634.1"/>
</dbReference>
<dbReference type="STRING" id="406327.Mevan_0791"/>
<dbReference type="GeneID" id="5324679"/>
<dbReference type="KEGG" id="mvn:Mevan_0791"/>
<dbReference type="eggNOG" id="arCOG04384">
    <property type="taxonomic scope" value="Archaea"/>
</dbReference>
<dbReference type="HOGENOM" id="CLU_136197_2_0_2"/>
<dbReference type="OrthoDB" id="187156at2157"/>
<dbReference type="UniPathway" id="UPA00148"/>
<dbReference type="Proteomes" id="UP000001107">
    <property type="component" value="Chromosome"/>
</dbReference>
<dbReference type="GO" id="GO:0005886">
    <property type="term" value="C:plasma membrane"/>
    <property type="evidence" value="ECO:0007669"/>
    <property type="project" value="UniProtKB-SubCell"/>
</dbReference>
<dbReference type="GO" id="GO:0015087">
    <property type="term" value="F:cobalt ion transmembrane transporter activity"/>
    <property type="evidence" value="ECO:0007669"/>
    <property type="project" value="UniProtKB-UniRule"/>
</dbReference>
<dbReference type="GO" id="GO:0009236">
    <property type="term" value="P:cobalamin biosynthetic process"/>
    <property type="evidence" value="ECO:0007669"/>
    <property type="project" value="UniProtKB-UniRule"/>
</dbReference>
<dbReference type="HAMAP" id="MF_00330">
    <property type="entry name" value="CbiN"/>
    <property type="match status" value="1"/>
</dbReference>
<dbReference type="InterPro" id="IPR003705">
    <property type="entry name" value="CbiN"/>
</dbReference>
<dbReference type="NCBIfam" id="TIGR01165">
    <property type="entry name" value="cbiN"/>
    <property type="match status" value="1"/>
</dbReference>
<dbReference type="NCBIfam" id="NF002780">
    <property type="entry name" value="PRK02898.1"/>
    <property type="match status" value="1"/>
</dbReference>
<dbReference type="PANTHER" id="PTHR38662">
    <property type="entry name" value="COBALT TRANSPORT PROTEIN CBIN"/>
    <property type="match status" value="1"/>
</dbReference>
<dbReference type="PANTHER" id="PTHR38662:SF1">
    <property type="entry name" value="COBALT TRANSPORT PROTEIN CBIN"/>
    <property type="match status" value="1"/>
</dbReference>
<dbReference type="Pfam" id="PF02553">
    <property type="entry name" value="CbiN"/>
    <property type="match status" value="1"/>
</dbReference>
<accession>A6UQC5</accession>
<name>CBIN_METVS</name>
<protein>
    <recommendedName>
        <fullName evidence="1">Cobalt transport protein CbiN</fullName>
    </recommendedName>
    <alternativeName>
        <fullName evidence="1">Energy-coupling factor transporter probable substrate-capture protein CbiN</fullName>
        <shortName evidence="1">ECF transporter S component CbiN</shortName>
    </alternativeName>
</protein>
<evidence type="ECO:0000255" key="1">
    <source>
        <dbReference type="HAMAP-Rule" id="MF_00330"/>
    </source>
</evidence>
<gene>
    <name evidence="1" type="primary">cbiN</name>
    <name type="ordered locus">Mevan_0791</name>
</gene>
<reference key="1">
    <citation type="submission" date="2007-06" db="EMBL/GenBank/DDBJ databases">
        <title>Complete sequence of Methanococcus vannielii SB.</title>
        <authorList>
            <consortium name="US DOE Joint Genome Institute"/>
            <person name="Copeland A."/>
            <person name="Lucas S."/>
            <person name="Lapidus A."/>
            <person name="Barry K."/>
            <person name="Glavina del Rio T."/>
            <person name="Dalin E."/>
            <person name="Tice H."/>
            <person name="Pitluck S."/>
            <person name="Chain P."/>
            <person name="Malfatti S."/>
            <person name="Shin M."/>
            <person name="Vergez L."/>
            <person name="Schmutz J."/>
            <person name="Larimer F."/>
            <person name="Land M."/>
            <person name="Hauser L."/>
            <person name="Kyrpides N."/>
            <person name="Anderson I."/>
            <person name="Sieprawska-Lupa M."/>
            <person name="Whitman W.B."/>
            <person name="Richardson P."/>
        </authorList>
    </citation>
    <scope>NUCLEOTIDE SEQUENCE [LARGE SCALE GENOMIC DNA]</scope>
    <source>
        <strain>ATCC 35089 / DSM 1224 / JCM 13029 / OCM 148 / SB</strain>
    </source>
</reference>
<comment type="function">
    <text evidence="1">Part of the energy-coupling factor (ECF) transporter complex CbiMNOQ involved in cobalt import.</text>
</comment>
<comment type="pathway">
    <text evidence="1">Cofactor biosynthesis; adenosylcobalamin biosynthesis.</text>
</comment>
<comment type="subunit">
    <text evidence="1">Forms an energy-coupling factor (ECF) transporter complex composed of an ATP-binding protein (A component, CbiO), a transmembrane protein (T component, CbiQ) and 2 possible substrate-capture proteins (S components, CbiM and CbiN) of unknown stoichimetry.</text>
</comment>
<comment type="subcellular location">
    <subcellularLocation>
        <location evidence="1">Cell membrane</location>
        <topology evidence="1">Multi-pass membrane protein</topology>
    </subcellularLocation>
</comment>
<comment type="similarity">
    <text evidence="1">Belongs to the CbiN family.</text>
</comment>
<feature type="chain" id="PRO_1000019397" description="Cobalt transport protein CbiN">
    <location>
        <begin position="1"/>
        <end position="99"/>
    </location>
</feature>
<feature type="transmembrane region" description="Helical" evidence="1">
    <location>
        <begin position="6"/>
        <end position="26"/>
    </location>
</feature>
<feature type="transmembrane region" description="Helical" evidence="1">
    <location>
        <begin position="68"/>
        <end position="88"/>
    </location>
</feature>
<keyword id="KW-1003">Cell membrane</keyword>
<keyword id="KW-0169">Cobalamin biosynthesis</keyword>
<keyword id="KW-0170">Cobalt</keyword>
<keyword id="KW-0171">Cobalt transport</keyword>
<keyword id="KW-0406">Ion transport</keyword>
<keyword id="KW-0472">Membrane</keyword>
<keyword id="KW-0812">Transmembrane</keyword>
<keyword id="KW-1133">Transmembrane helix</keyword>
<keyword id="KW-0813">Transport</keyword>